<organism>
    <name type="scientific">Chlorobaculum parvum (strain DSM 263 / NCIMB 8327)</name>
    <name type="common">Chlorobium vibrioforme subsp. thiosulfatophilum</name>
    <dbReference type="NCBI Taxonomy" id="517417"/>
    <lineage>
        <taxon>Bacteria</taxon>
        <taxon>Pseudomonadati</taxon>
        <taxon>Chlorobiota</taxon>
        <taxon>Chlorobiia</taxon>
        <taxon>Chlorobiales</taxon>
        <taxon>Chlorobiaceae</taxon>
        <taxon>Chlorobaculum</taxon>
    </lineage>
</organism>
<proteinExistence type="inferred from homology"/>
<feature type="chain" id="PRO_1000140937" description="Small ribosomal subunit protein uS3">
    <location>
        <begin position="1"/>
        <end position="254"/>
    </location>
</feature>
<feature type="domain" description="KH type-2" evidence="1">
    <location>
        <begin position="39"/>
        <end position="109"/>
    </location>
</feature>
<feature type="region of interest" description="Disordered" evidence="2">
    <location>
        <begin position="220"/>
        <end position="254"/>
    </location>
</feature>
<feature type="compositionally biased region" description="Basic and acidic residues" evidence="2">
    <location>
        <begin position="221"/>
        <end position="242"/>
    </location>
</feature>
<feature type="compositionally biased region" description="Basic residues" evidence="2">
    <location>
        <begin position="243"/>
        <end position="254"/>
    </location>
</feature>
<protein>
    <recommendedName>
        <fullName evidence="1">Small ribosomal subunit protein uS3</fullName>
    </recommendedName>
    <alternativeName>
        <fullName evidence="3">30S ribosomal protein S3</fullName>
    </alternativeName>
</protein>
<gene>
    <name evidence="1" type="primary">rpsC</name>
    <name type="ordered locus">Cpar_0183</name>
</gene>
<keyword id="KW-0687">Ribonucleoprotein</keyword>
<keyword id="KW-0689">Ribosomal protein</keyword>
<keyword id="KW-0694">RNA-binding</keyword>
<keyword id="KW-0699">rRNA-binding</keyword>
<reference key="1">
    <citation type="submission" date="2008-06" db="EMBL/GenBank/DDBJ databases">
        <title>Complete sequence of Chlorobaculum parvum NCIB 8327.</title>
        <authorList>
            <consortium name="US DOE Joint Genome Institute"/>
            <person name="Lucas S."/>
            <person name="Copeland A."/>
            <person name="Lapidus A."/>
            <person name="Glavina del Rio T."/>
            <person name="Dalin E."/>
            <person name="Tice H."/>
            <person name="Bruce D."/>
            <person name="Goodwin L."/>
            <person name="Pitluck S."/>
            <person name="Schmutz J."/>
            <person name="Larimer F."/>
            <person name="Land M."/>
            <person name="Hauser L."/>
            <person name="Kyrpides N."/>
            <person name="Mikhailova N."/>
            <person name="Zhao F."/>
            <person name="Li T."/>
            <person name="Liu Z."/>
            <person name="Overmann J."/>
            <person name="Bryant D.A."/>
            <person name="Richardson P."/>
        </authorList>
    </citation>
    <scope>NUCLEOTIDE SEQUENCE [LARGE SCALE GENOMIC DNA]</scope>
    <source>
        <strain>DSM 263 / NCIMB 8327</strain>
    </source>
</reference>
<comment type="function">
    <text evidence="1">Binds the lower part of the 30S subunit head. Binds mRNA in the 70S ribosome, positioning it for translation.</text>
</comment>
<comment type="subunit">
    <text evidence="1">Part of the 30S ribosomal subunit. Forms a tight complex with proteins S10 and S14.</text>
</comment>
<comment type="similarity">
    <text evidence="1">Belongs to the universal ribosomal protein uS3 family.</text>
</comment>
<sequence>MGQKVNPTGFRLGIIKDWTSRWYDDGPVIAEKIKQDQVIRNYISARLKKEKAGVSKVVIERTTKHIKINIYAARPGAVVGRKGEEINNLSQELTRITGREVKIDVIEVIKPEIEAQLIGENIAYQLENRVSFRRAMKQAIQQAMRAGAEGIRIRCAGRLGGVEIARSEQYKEGKIPLHTLRANVDYASVTAHTIAGAIGIKVWVYKGEVLVQRLDAIEEEEMKKMQERRNDSRGRGRGDGRGAKRRRRPAAKKA</sequence>
<name>RS3_CHLP8</name>
<accession>B3QR86</accession>
<evidence type="ECO:0000255" key="1">
    <source>
        <dbReference type="HAMAP-Rule" id="MF_01309"/>
    </source>
</evidence>
<evidence type="ECO:0000256" key="2">
    <source>
        <dbReference type="SAM" id="MobiDB-lite"/>
    </source>
</evidence>
<evidence type="ECO:0000305" key="3"/>
<dbReference type="EMBL" id="CP001099">
    <property type="protein sequence ID" value="ACF10610.1"/>
    <property type="molecule type" value="Genomic_DNA"/>
</dbReference>
<dbReference type="RefSeq" id="WP_012501445.1">
    <property type="nucleotide sequence ID" value="NC_011027.1"/>
</dbReference>
<dbReference type="SMR" id="B3QR86"/>
<dbReference type="STRING" id="517417.Cpar_0183"/>
<dbReference type="KEGG" id="cpc:Cpar_0183"/>
<dbReference type="eggNOG" id="COG0092">
    <property type="taxonomic scope" value="Bacteria"/>
</dbReference>
<dbReference type="HOGENOM" id="CLU_058591_0_2_10"/>
<dbReference type="OrthoDB" id="9806396at2"/>
<dbReference type="Proteomes" id="UP000008811">
    <property type="component" value="Chromosome"/>
</dbReference>
<dbReference type="GO" id="GO:0022627">
    <property type="term" value="C:cytosolic small ribosomal subunit"/>
    <property type="evidence" value="ECO:0007669"/>
    <property type="project" value="TreeGrafter"/>
</dbReference>
<dbReference type="GO" id="GO:0003729">
    <property type="term" value="F:mRNA binding"/>
    <property type="evidence" value="ECO:0007669"/>
    <property type="project" value="UniProtKB-UniRule"/>
</dbReference>
<dbReference type="GO" id="GO:0019843">
    <property type="term" value="F:rRNA binding"/>
    <property type="evidence" value="ECO:0007669"/>
    <property type="project" value="UniProtKB-UniRule"/>
</dbReference>
<dbReference type="GO" id="GO:0003735">
    <property type="term" value="F:structural constituent of ribosome"/>
    <property type="evidence" value="ECO:0007669"/>
    <property type="project" value="InterPro"/>
</dbReference>
<dbReference type="GO" id="GO:0006412">
    <property type="term" value="P:translation"/>
    <property type="evidence" value="ECO:0007669"/>
    <property type="project" value="UniProtKB-UniRule"/>
</dbReference>
<dbReference type="CDD" id="cd02412">
    <property type="entry name" value="KH-II_30S_S3"/>
    <property type="match status" value="1"/>
</dbReference>
<dbReference type="FunFam" id="3.30.300.20:FF:000001">
    <property type="entry name" value="30S ribosomal protein S3"/>
    <property type="match status" value="1"/>
</dbReference>
<dbReference type="Gene3D" id="3.30.300.20">
    <property type="match status" value="1"/>
</dbReference>
<dbReference type="Gene3D" id="3.30.1140.32">
    <property type="entry name" value="Ribosomal protein S3, C-terminal domain"/>
    <property type="match status" value="1"/>
</dbReference>
<dbReference type="HAMAP" id="MF_01309_B">
    <property type="entry name" value="Ribosomal_uS3_B"/>
    <property type="match status" value="1"/>
</dbReference>
<dbReference type="InterPro" id="IPR004087">
    <property type="entry name" value="KH_dom"/>
</dbReference>
<dbReference type="InterPro" id="IPR015946">
    <property type="entry name" value="KH_dom-like_a/b"/>
</dbReference>
<dbReference type="InterPro" id="IPR004044">
    <property type="entry name" value="KH_dom_type_2"/>
</dbReference>
<dbReference type="InterPro" id="IPR009019">
    <property type="entry name" value="KH_sf_prok-type"/>
</dbReference>
<dbReference type="InterPro" id="IPR036419">
    <property type="entry name" value="Ribosomal_S3_C_sf"/>
</dbReference>
<dbReference type="InterPro" id="IPR005704">
    <property type="entry name" value="Ribosomal_uS3_bac-typ"/>
</dbReference>
<dbReference type="InterPro" id="IPR001351">
    <property type="entry name" value="Ribosomal_uS3_C"/>
</dbReference>
<dbReference type="InterPro" id="IPR018280">
    <property type="entry name" value="Ribosomal_uS3_CS"/>
</dbReference>
<dbReference type="NCBIfam" id="TIGR01009">
    <property type="entry name" value="rpsC_bact"/>
    <property type="match status" value="1"/>
</dbReference>
<dbReference type="PANTHER" id="PTHR11760">
    <property type="entry name" value="30S/40S RIBOSOMAL PROTEIN S3"/>
    <property type="match status" value="1"/>
</dbReference>
<dbReference type="PANTHER" id="PTHR11760:SF19">
    <property type="entry name" value="SMALL RIBOSOMAL SUBUNIT PROTEIN US3C"/>
    <property type="match status" value="1"/>
</dbReference>
<dbReference type="Pfam" id="PF07650">
    <property type="entry name" value="KH_2"/>
    <property type="match status" value="1"/>
</dbReference>
<dbReference type="Pfam" id="PF00189">
    <property type="entry name" value="Ribosomal_S3_C"/>
    <property type="match status" value="1"/>
</dbReference>
<dbReference type="SMART" id="SM00322">
    <property type="entry name" value="KH"/>
    <property type="match status" value="1"/>
</dbReference>
<dbReference type="SUPFAM" id="SSF54814">
    <property type="entry name" value="Prokaryotic type KH domain (KH-domain type II)"/>
    <property type="match status" value="1"/>
</dbReference>
<dbReference type="SUPFAM" id="SSF54821">
    <property type="entry name" value="Ribosomal protein S3 C-terminal domain"/>
    <property type="match status" value="1"/>
</dbReference>
<dbReference type="PROSITE" id="PS50823">
    <property type="entry name" value="KH_TYPE_2"/>
    <property type="match status" value="1"/>
</dbReference>
<dbReference type="PROSITE" id="PS00548">
    <property type="entry name" value="RIBOSOMAL_S3"/>
    <property type="match status" value="1"/>
</dbReference>